<reference key="1">
    <citation type="journal article" date="2018" name="Sci. Rep.">
        <title>Peptide ion channel toxins from the bootlace worm, the longest animal on Earth.</title>
        <authorList>
            <person name="Jacobsson E."/>
            <person name="Andersson H.S."/>
            <person name="Strand M."/>
            <person name="Peigneur S."/>
            <person name="Eriksson C."/>
            <person name="Loden H."/>
            <person name="Shariatgorji M."/>
            <person name="Andren P.E."/>
            <person name="Lebbe E.K.M."/>
            <person name="Rosengren K.J."/>
            <person name="Tytgat J."/>
            <person name="Goeransson U."/>
        </authorList>
    </citation>
    <scope>NUCLEOTIDE SEQUENCE [MRNA]</scope>
</reference>
<reference key="2">
    <citation type="journal article" date="2021" name="J. Nat. Prod.">
        <title>Functional characterization of the nemertide alpha family of peptide toxins.</title>
        <authorList>
            <person name="Jacobsson E."/>
            <person name="Peigneur S."/>
            <person name="Andersson H.S."/>
            <person name="Laborde Q."/>
            <person name="Strand M."/>
            <person name="Tytgat J."/>
            <person name="Goeransson U."/>
        </authorList>
    </citation>
    <scope>NUCLEOTIDE SEQUENCE [MRNA]</scope>
</reference>
<keyword id="KW-1015">Disulfide bond</keyword>
<keyword id="KW-0379">Hydroxylation</keyword>
<keyword id="KW-0872">Ion channel impairing toxin</keyword>
<keyword id="KW-0960">Knottin</keyword>
<keyword id="KW-0528">Neurotoxin</keyword>
<keyword id="KW-0964">Secreted</keyword>
<keyword id="KW-0800">Toxin</keyword>
<keyword id="KW-0738">Voltage-gated sodium channel impairing toxin</keyword>
<name>NEMA8_RISOC</name>
<protein>
    <recommendedName>
        <fullName evidence="4">Nemertide alpha-8</fullName>
    </recommendedName>
</protein>
<accession>P0DQT0</accession>
<organism>
    <name type="scientific">Riseriellus occultus</name>
    <name type="common">Ribbon worm</name>
    <dbReference type="NCBI Taxonomy" id="88934"/>
    <lineage>
        <taxon>Eukaryota</taxon>
        <taxon>Metazoa</taxon>
        <taxon>Spiralia</taxon>
        <taxon>Lophotrochozoa</taxon>
        <taxon>Nemertea</taxon>
        <taxon>Pilidiophora</taxon>
        <taxon>Heteronemertea</taxon>
        <taxon>Lineidae</taxon>
        <taxon>Riseriellus</taxon>
    </lineage>
</organism>
<evidence type="ECO:0000250" key="1">
    <source>
        <dbReference type="UniProtKB" id="P0DM24"/>
    </source>
</evidence>
<evidence type="ECO:0000250" key="2">
    <source>
        <dbReference type="UniProtKB" id="P0DQS7"/>
    </source>
</evidence>
<evidence type="ECO:0000269" key="3">
    <source>
    </source>
</evidence>
<evidence type="ECO:0000303" key="4">
    <source>
    </source>
</evidence>
<evidence type="ECO:0000305" key="5"/>
<evidence type="ECO:0000305" key="6">
    <source>
    </source>
</evidence>
<evidence type="ECO:0000305" key="7">
    <source>
    </source>
</evidence>
<dbReference type="SMR" id="P0DQT0"/>
<dbReference type="GO" id="GO:0005576">
    <property type="term" value="C:extracellular region"/>
    <property type="evidence" value="ECO:0007669"/>
    <property type="project" value="UniProtKB-SubCell"/>
</dbReference>
<dbReference type="GO" id="GO:0017080">
    <property type="term" value="F:sodium channel regulator activity"/>
    <property type="evidence" value="ECO:0007669"/>
    <property type="project" value="UniProtKB-KW"/>
</dbReference>
<dbReference type="GO" id="GO:0090729">
    <property type="term" value="F:toxin activity"/>
    <property type="evidence" value="ECO:0007669"/>
    <property type="project" value="UniProtKB-KW"/>
</dbReference>
<feature type="chain" id="PRO_0000454431" description="Nemertide alpha-8" evidence="6">
    <location>
        <begin position="1"/>
        <end position="27" status="greater than"/>
    </location>
</feature>
<feature type="site" description="Hydrophobic/aromatic residue important for potent activity" evidence="7">
    <location>
        <position position="8"/>
    </location>
</feature>
<feature type="disulfide bond" evidence="1">
    <location>
        <begin position="2"/>
        <end position="16"/>
    </location>
</feature>
<feature type="disulfide bond" evidence="1">
    <location>
        <begin position="9"/>
        <end position="20"/>
    </location>
</feature>
<feature type="disulfide bond" evidence="1">
    <location>
        <begin position="15"/>
        <end position="26"/>
    </location>
</feature>
<feature type="non-terminal residue" evidence="6">
    <location>
        <position position="27"/>
    </location>
</feature>
<sequence>GCIATGSFCTLSKGCCTKNCGWNFACN</sequence>
<comment type="function">
    <text evidence="1 2">Highly potent toxin against both insect and some mammalian sodium channels (Nav). It potently inhibits inactivation of insect sodium channels of B.germanica (BgNav1) and also delays the inactivation of mammalian Nav with potent activity on Nav1.3/SCN3A and Nav1.4/SCN4A (By similarity). 1 uM is enough to completely inhibits the inactivation, resulting in sustained non-inactivating currents. In addition, the toxin significantly enhances the recovery from inactivation, and the open state is not required for the toxin to interact with the channel (By similarity). In vivo, injection into brine shrimp (Artemia salina) stops movement or causes death after 24 hours (EC(50)=0.4 uM) (By similarity).</text>
</comment>
<comment type="subcellular location">
    <subcellularLocation>
        <location evidence="1">Secreted</location>
    </subcellularLocation>
</comment>
<comment type="tissue specificity">
    <text evidence="1">Confined to the epidermis and to the mucus layer.</text>
</comment>
<comment type="domain">
    <text evidence="1">The presence of a 'disulfide through disulfide knot' structurally defines this protein as a knottin.</text>
</comment>
<comment type="miscellaneous">
    <text evidence="3">Negative results: does not show effect on rat Nav1.8/SCN10A.</text>
</comment>
<comment type="similarity">
    <text evidence="5">Belongs to the nemertide family.</text>
</comment>
<proteinExistence type="evidence at transcript level"/>